<reference key="1">
    <citation type="journal article" date="2004" name="PLoS Biol.">
        <title>Phylogenomics of the reproductive parasite Wolbachia pipientis wMel: a streamlined genome overrun by mobile genetic elements.</title>
        <authorList>
            <person name="Wu M."/>
            <person name="Sun L.V."/>
            <person name="Vamathevan J.J."/>
            <person name="Riegler M."/>
            <person name="DeBoy R.T."/>
            <person name="Brownlie J.C."/>
            <person name="McGraw E.A."/>
            <person name="Martin W."/>
            <person name="Esser C."/>
            <person name="Ahmadinejad N."/>
            <person name="Wiegand C."/>
            <person name="Madupu R."/>
            <person name="Beanan M.J."/>
            <person name="Brinkac L.M."/>
            <person name="Daugherty S.C."/>
            <person name="Durkin A.S."/>
            <person name="Kolonay J.F."/>
            <person name="Nelson W.C."/>
            <person name="Mohamoud Y."/>
            <person name="Lee P."/>
            <person name="Berry K.J."/>
            <person name="Young M.B."/>
            <person name="Utterback T.R."/>
            <person name="Weidman J.F."/>
            <person name="Nierman W.C."/>
            <person name="Paulsen I.T."/>
            <person name="Nelson K.E."/>
            <person name="Tettelin H."/>
            <person name="O'Neill S.L."/>
            <person name="Eisen J.A."/>
        </authorList>
    </citation>
    <scope>NUCLEOTIDE SEQUENCE [LARGE SCALE GENOMIC DNA]</scope>
</reference>
<accession>Q73HA9</accession>
<evidence type="ECO:0000255" key="1">
    <source>
        <dbReference type="HAMAP-Rule" id="MF_00059"/>
    </source>
</evidence>
<protein>
    <recommendedName>
        <fullName evidence="1">DNA-directed RNA polymerase subunit alpha</fullName>
        <shortName evidence="1">RNAP subunit alpha</shortName>
        <ecNumber evidence="1">2.7.7.6</ecNumber>
    </recommendedName>
    <alternativeName>
        <fullName evidence="1">RNA polymerase subunit alpha</fullName>
    </alternativeName>
    <alternativeName>
        <fullName evidence="1">Transcriptase subunit alpha</fullName>
    </alternativeName>
</protein>
<comment type="function">
    <text evidence="1">DNA-dependent RNA polymerase catalyzes the transcription of DNA into RNA using the four ribonucleoside triphosphates as substrates.</text>
</comment>
<comment type="catalytic activity">
    <reaction evidence="1">
        <text>RNA(n) + a ribonucleoside 5'-triphosphate = RNA(n+1) + diphosphate</text>
        <dbReference type="Rhea" id="RHEA:21248"/>
        <dbReference type="Rhea" id="RHEA-COMP:14527"/>
        <dbReference type="Rhea" id="RHEA-COMP:17342"/>
        <dbReference type="ChEBI" id="CHEBI:33019"/>
        <dbReference type="ChEBI" id="CHEBI:61557"/>
        <dbReference type="ChEBI" id="CHEBI:140395"/>
        <dbReference type="EC" id="2.7.7.6"/>
    </reaction>
</comment>
<comment type="subunit">
    <text evidence="1">Homodimer. The RNAP catalytic core consists of 2 alpha, 1 beta, 1 beta' and 1 omega subunit. When a sigma factor is associated with the core the holoenzyme is formed, which can initiate transcription.</text>
</comment>
<comment type="domain">
    <text evidence="1">The N-terminal domain is essential for RNAP assembly and basal transcription, whereas the C-terminal domain is involved in interaction with transcriptional regulators and with upstream promoter elements.</text>
</comment>
<comment type="similarity">
    <text evidence="1">Belongs to the RNA polymerase alpha chain family.</text>
</comment>
<keyword id="KW-0240">DNA-directed RNA polymerase</keyword>
<keyword id="KW-0548">Nucleotidyltransferase</keyword>
<keyword id="KW-0804">Transcription</keyword>
<keyword id="KW-0808">Transferase</keyword>
<feature type="chain" id="PRO_0000175421" description="DNA-directed RNA polymerase subunit alpha">
    <location>
        <begin position="1"/>
        <end position="355"/>
    </location>
</feature>
<feature type="region of interest" description="Alpha N-terminal domain (alpha-NTD)" evidence="1">
    <location>
        <begin position="1"/>
        <end position="248"/>
    </location>
</feature>
<feature type="region of interest" description="Alpha C-terminal domain (alpha-CTD)" evidence="1">
    <location>
        <begin position="267"/>
        <end position="355"/>
    </location>
</feature>
<sequence length="355" mass="39056">MYYNNDVSLCSNLDKLIKPSSVKVVSDDSSEKSDIVLEPLESGFALTLGNALRRVMLSSLKGSAVYGIKIEGVTHEFTSIQGVREDVTDIVLNMGMLRCKLNGASNKCLNLNAKGPCQVLAGMIETDDQCSIVNKDLLICTLGQNVELNMTIYVASGKGYLPVTKYKENELLKLMSEQDLIGFIPVNALYSPVNRVSYRVENSRVGQVTDKDKLILSIETDGTISPSQAVDSAARILQEQLQPFISSDVSYKKSQVSSSSGAKDLGYDPVLLRKVDEMELSVRSHNCLKNENITYIGDLVQKTEGEMLRTANFGRKSLNEIKAVLTNFGLSLGMNVLNWPPKDIDELAKQHTDED</sequence>
<proteinExistence type="inferred from homology"/>
<name>RPOA_WOLPM</name>
<organism>
    <name type="scientific">Wolbachia pipientis wMel</name>
    <dbReference type="NCBI Taxonomy" id="163164"/>
    <lineage>
        <taxon>Bacteria</taxon>
        <taxon>Pseudomonadati</taxon>
        <taxon>Pseudomonadota</taxon>
        <taxon>Alphaproteobacteria</taxon>
        <taxon>Rickettsiales</taxon>
        <taxon>Anaplasmataceae</taxon>
        <taxon>Wolbachieae</taxon>
        <taxon>Wolbachia</taxon>
    </lineage>
</organism>
<gene>
    <name evidence="1" type="primary">rpoA</name>
    <name type="ordered locus">WD_0658</name>
</gene>
<dbReference type="EC" id="2.7.7.6" evidence="1"/>
<dbReference type="EMBL" id="AE017196">
    <property type="protein sequence ID" value="AAS14356.1"/>
    <property type="molecule type" value="Genomic_DNA"/>
</dbReference>
<dbReference type="RefSeq" id="WP_010962743.1">
    <property type="nucleotide sequence ID" value="NZ_OX384529.1"/>
</dbReference>
<dbReference type="SMR" id="Q73HA9"/>
<dbReference type="EnsemblBacteria" id="AAS14356">
    <property type="protein sequence ID" value="AAS14356"/>
    <property type="gene ID" value="WD_0658"/>
</dbReference>
<dbReference type="KEGG" id="wol:WD_0658"/>
<dbReference type="eggNOG" id="COG0202">
    <property type="taxonomic scope" value="Bacteria"/>
</dbReference>
<dbReference type="Proteomes" id="UP000008215">
    <property type="component" value="Chromosome"/>
</dbReference>
<dbReference type="GO" id="GO:0005737">
    <property type="term" value="C:cytoplasm"/>
    <property type="evidence" value="ECO:0007669"/>
    <property type="project" value="UniProtKB-ARBA"/>
</dbReference>
<dbReference type="GO" id="GO:0000428">
    <property type="term" value="C:DNA-directed RNA polymerase complex"/>
    <property type="evidence" value="ECO:0007669"/>
    <property type="project" value="UniProtKB-KW"/>
</dbReference>
<dbReference type="GO" id="GO:0003677">
    <property type="term" value="F:DNA binding"/>
    <property type="evidence" value="ECO:0007669"/>
    <property type="project" value="UniProtKB-UniRule"/>
</dbReference>
<dbReference type="GO" id="GO:0003899">
    <property type="term" value="F:DNA-directed RNA polymerase activity"/>
    <property type="evidence" value="ECO:0007669"/>
    <property type="project" value="UniProtKB-UniRule"/>
</dbReference>
<dbReference type="GO" id="GO:0046983">
    <property type="term" value="F:protein dimerization activity"/>
    <property type="evidence" value="ECO:0007669"/>
    <property type="project" value="InterPro"/>
</dbReference>
<dbReference type="GO" id="GO:0006351">
    <property type="term" value="P:DNA-templated transcription"/>
    <property type="evidence" value="ECO:0007669"/>
    <property type="project" value="UniProtKB-UniRule"/>
</dbReference>
<dbReference type="CDD" id="cd06928">
    <property type="entry name" value="RNAP_alpha_NTD"/>
    <property type="match status" value="1"/>
</dbReference>
<dbReference type="FunFam" id="1.10.150.20:FF:000001">
    <property type="entry name" value="DNA-directed RNA polymerase subunit alpha"/>
    <property type="match status" value="1"/>
</dbReference>
<dbReference type="FunFam" id="2.170.120.12:FF:000001">
    <property type="entry name" value="DNA-directed RNA polymerase subunit alpha"/>
    <property type="match status" value="1"/>
</dbReference>
<dbReference type="Gene3D" id="1.10.150.20">
    <property type="entry name" value="5' to 3' exonuclease, C-terminal subdomain"/>
    <property type="match status" value="1"/>
</dbReference>
<dbReference type="Gene3D" id="2.170.120.12">
    <property type="entry name" value="DNA-directed RNA polymerase, insert domain"/>
    <property type="match status" value="1"/>
</dbReference>
<dbReference type="Gene3D" id="3.30.1360.10">
    <property type="entry name" value="RNA polymerase, RBP11-like subunit"/>
    <property type="match status" value="1"/>
</dbReference>
<dbReference type="HAMAP" id="MF_00059">
    <property type="entry name" value="RNApol_bact_RpoA"/>
    <property type="match status" value="1"/>
</dbReference>
<dbReference type="InterPro" id="IPR011262">
    <property type="entry name" value="DNA-dir_RNA_pol_insert"/>
</dbReference>
<dbReference type="InterPro" id="IPR011263">
    <property type="entry name" value="DNA-dir_RNA_pol_RpoA/D/Rpb3"/>
</dbReference>
<dbReference type="InterPro" id="IPR011773">
    <property type="entry name" value="DNA-dir_RpoA"/>
</dbReference>
<dbReference type="InterPro" id="IPR036603">
    <property type="entry name" value="RBP11-like"/>
</dbReference>
<dbReference type="InterPro" id="IPR011260">
    <property type="entry name" value="RNAP_asu_C"/>
</dbReference>
<dbReference type="InterPro" id="IPR036643">
    <property type="entry name" value="RNApol_insert_sf"/>
</dbReference>
<dbReference type="NCBIfam" id="NF003513">
    <property type="entry name" value="PRK05182.1-2"/>
    <property type="match status" value="1"/>
</dbReference>
<dbReference type="NCBIfam" id="NF003519">
    <property type="entry name" value="PRK05182.2-5"/>
    <property type="match status" value="1"/>
</dbReference>
<dbReference type="NCBIfam" id="TIGR02027">
    <property type="entry name" value="rpoA"/>
    <property type="match status" value="1"/>
</dbReference>
<dbReference type="Pfam" id="PF01000">
    <property type="entry name" value="RNA_pol_A_bac"/>
    <property type="match status" value="1"/>
</dbReference>
<dbReference type="Pfam" id="PF03118">
    <property type="entry name" value="RNA_pol_A_CTD"/>
    <property type="match status" value="1"/>
</dbReference>
<dbReference type="Pfam" id="PF01193">
    <property type="entry name" value="RNA_pol_L"/>
    <property type="match status" value="1"/>
</dbReference>
<dbReference type="SMART" id="SM00662">
    <property type="entry name" value="RPOLD"/>
    <property type="match status" value="1"/>
</dbReference>
<dbReference type="SUPFAM" id="SSF47789">
    <property type="entry name" value="C-terminal domain of RNA polymerase alpha subunit"/>
    <property type="match status" value="1"/>
</dbReference>
<dbReference type="SUPFAM" id="SSF56553">
    <property type="entry name" value="Insert subdomain of RNA polymerase alpha subunit"/>
    <property type="match status" value="1"/>
</dbReference>
<dbReference type="SUPFAM" id="SSF55257">
    <property type="entry name" value="RBP11-like subunits of RNA polymerase"/>
    <property type="match status" value="1"/>
</dbReference>